<keyword id="KW-0028">Amino-acid biosynthesis</keyword>
<keyword id="KW-0032">Aminotransferase</keyword>
<keyword id="KW-0368">Histidine biosynthesis</keyword>
<keyword id="KW-0663">Pyridoxal phosphate</keyword>
<keyword id="KW-1185">Reference proteome</keyword>
<keyword id="KW-0808">Transferase</keyword>
<evidence type="ECO:0000255" key="1">
    <source>
        <dbReference type="HAMAP-Rule" id="MF_01023"/>
    </source>
</evidence>
<name>HIS8_ROSDO</name>
<gene>
    <name evidence="1" type="primary">hisC</name>
    <name type="ordered locus">RD1_3388</name>
</gene>
<comment type="catalytic activity">
    <reaction evidence="1">
        <text>L-histidinol phosphate + 2-oxoglutarate = 3-(imidazol-4-yl)-2-oxopropyl phosphate + L-glutamate</text>
        <dbReference type="Rhea" id="RHEA:23744"/>
        <dbReference type="ChEBI" id="CHEBI:16810"/>
        <dbReference type="ChEBI" id="CHEBI:29985"/>
        <dbReference type="ChEBI" id="CHEBI:57766"/>
        <dbReference type="ChEBI" id="CHEBI:57980"/>
        <dbReference type="EC" id="2.6.1.9"/>
    </reaction>
</comment>
<comment type="cofactor">
    <cofactor evidence="1">
        <name>pyridoxal 5'-phosphate</name>
        <dbReference type="ChEBI" id="CHEBI:597326"/>
    </cofactor>
</comment>
<comment type="pathway">
    <text evidence="1">Amino-acid biosynthesis; L-histidine biosynthesis; L-histidine from 5-phospho-alpha-D-ribose 1-diphosphate: step 7/9.</text>
</comment>
<comment type="subunit">
    <text evidence="1">Homodimer.</text>
</comment>
<comment type="similarity">
    <text evidence="1">Belongs to the class-II pyridoxal-phosphate-dependent aminotransferase family. Histidinol-phosphate aminotransferase subfamily.</text>
</comment>
<reference key="1">
    <citation type="journal article" date="2007" name="J. Bacteriol.">
        <title>The complete genome sequence of Roseobacter denitrificans reveals a mixotrophic rather than photosynthetic metabolism.</title>
        <authorList>
            <person name="Swingley W.D."/>
            <person name="Sadekar S."/>
            <person name="Mastrian S.D."/>
            <person name="Matthies H.J."/>
            <person name="Hao J."/>
            <person name="Ramos H."/>
            <person name="Acharya C.R."/>
            <person name="Conrad A.L."/>
            <person name="Taylor H.L."/>
            <person name="Dejesa L.C."/>
            <person name="Shah M.K."/>
            <person name="O'Huallachain M.E."/>
            <person name="Lince M.T."/>
            <person name="Blankenship R.E."/>
            <person name="Beatty J.T."/>
            <person name="Touchman J.W."/>
        </authorList>
    </citation>
    <scope>NUCLEOTIDE SEQUENCE [LARGE SCALE GENOMIC DNA]</scope>
    <source>
        <strain>ATCC 33942 / OCh 114</strain>
    </source>
</reference>
<accession>Q163G3</accession>
<feature type="chain" id="PRO_0000319784" description="Histidinol-phosphate aminotransferase">
    <location>
        <begin position="1"/>
        <end position="359"/>
    </location>
</feature>
<feature type="modified residue" description="N6-(pyridoxal phosphate)lysine" evidence="1">
    <location>
        <position position="217"/>
    </location>
</feature>
<sequence length="359" mass="38006">MRITAQPGIMDIALYQGGASQIDGQAEPLKLSSNENPSGCSPAASAKVAETALDLHRYPSTDHSALRMAIGQVHGLDAGRIICGVGSDELLTLLAMAFAGPGDEVLYTEHGFSMYRIFALSAGATPVVAPEKDRTVDIDAIIDRLTPATRLVYIANPANPTGTAIGLEALRRLAQSVPPTSLLVLDGAYAEFFEGYDGGASLVDEFDNVVMTRTFSKLYGLGGLRVGWAYATQEVIDVLNRVRGPFNLSSVALAGAEAAVNDRAFVETCLQENAAQRVRLMGGLNQLGIACDPSHANFVLARFADEAEALAADAHLKSEGILVRIVKGYGFPEALRITVGRADDVTRVLDALARFKGVS</sequence>
<protein>
    <recommendedName>
        <fullName evidence="1">Histidinol-phosphate aminotransferase</fullName>
        <ecNumber evidence="1">2.6.1.9</ecNumber>
    </recommendedName>
    <alternativeName>
        <fullName evidence="1">Imidazole acetol-phosphate transaminase</fullName>
    </alternativeName>
</protein>
<dbReference type="EC" id="2.6.1.9" evidence="1"/>
<dbReference type="EMBL" id="CP000362">
    <property type="protein sequence ID" value="ABG32880.1"/>
    <property type="molecule type" value="Genomic_DNA"/>
</dbReference>
<dbReference type="RefSeq" id="WP_011569495.1">
    <property type="nucleotide sequence ID" value="NC_008209.1"/>
</dbReference>
<dbReference type="SMR" id="Q163G3"/>
<dbReference type="STRING" id="375451.RD1_3388"/>
<dbReference type="KEGG" id="rde:RD1_3388"/>
<dbReference type="eggNOG" id="COG0079">
    <property type="taxonomic scope" value="Bacteria"/>
</dbReference>
<dbReference type="HOGENOM" id="CLU_017584_3_3_5"/>
<dbReference type="OrthoDB" id="9809616at2"/>
<dbReference type="UniPathway" id="UPA00031">
    <property type="reaction ID" value="UER00012"/>
</dbReference>
<dbReference type="Proteomes" id="UP000007029">
    <property type="component" value="Chromosome"/>
</dbReference>
<dbReference type="GO" id="GO:0004400">
    <property type="term" value="F:histidinol-phosphate transaminase activity"/>
    <property type="evidence" value="ECO:0007669"/>
    <property type="project" value="UniProtKB-UniRule"/>
</dbReference>
<dbReference type="GO" id="GO:0030170">
    <property type="term" value="F:pyridoxal phosphate binding"/>
    <property type="evidence" value="ECO:0007669"/>
    <property type="project" value="InterPro"/>
</dbReference>
<dbReference type="GO" id="GO:0000105">
    <property type="term" value="P:L-histidine biosynthetic process"/>
    <property type="evidence" value="ECO:0007669"/>
    <property type="project" value="UniProtKB-UniRule"/>
</dbReference>
<dbReference type="CDD" id="cd00609">
    <property type="entry name" value="AAT_like"/>
    <property type="match status" value="1"/>
</dbReference>
<dbReference type="Gene3D" id="3.90.1150.10">
    <property type="entry name" value="Aspartate Aminotransferase, domain 1"/>
    <property type="match status" value="1"/>
</dbReference>
<dbReference type="Gene3D" id="3.40.640.10">
    <property type="entry name" value="Type I PLP-dependent aspartate aminotransferase-like (Major domain)"/>
    <property type="match status" value="1"/>
</dbReference>
<dbReference type="HAMAP" id="MF_01023">
    <property type="entry name" value="HisC_aminotrans_2"/>
    <property type="match status" value="1"/>
</dbReference>
<dbReference type="InterPro" id="IPR004839">
    <property type="entry name" value="Aminotransferase_I/II_large"/>
</dbReference>
<dbReference type="InterPro" id="IPR005861">
    <property type="entry name" value="HisP_aminotrans"/>
</dbReference>
<dbReference type="InterPro" id="IPR050106">
    <property type="entry name" value="HistidinolP_aminotransfase"/>
</dbReference>
<dbReference type="InterPro" id="IPR015424">
    <property type="entry name" value="PyrdxlP-dep_Trfase"/>
</dbReference>
<dbReference type="InterPro" id="IPR015421">
    <property type="entry name" value="PyrdxlP-dep_Trfase_major"/>
</dbReference>
<dbReference type="InterPro" id="IPR015422">
    <property type="entry name" value="PyrdxlP-dep_Trfase_small"/>
</dbReference>
<dbReference type="NCBIfam" id="TIGR01141">
    <property type="entry name" value="hisC"/>
    <property type="match status" value="1"/>
</dbReference>
<dbReference type="PANTHER" id="PTHR43643:SF3">
    <property type="entry name" value="HISTIDINOL-PHOSPHATE AMINOTRANSFERASE"/>
    <property type="match status" value="1"/>
</dbReference>
<dbReference type="PANTHER" id="PTHR43643">
    <property type="entry name" value="HISTIDINOL-PHOSPHATE AMINOTRANSFERASE 2"/>
    <property type="match status" value="1"/>
</dbReference>
<dbReference type="Pfam" id="PF00155">
    <property type="entry name" value="Aminotran_1_2"/>
    <property type="match status" value="1"/>
</dbReference>
<dbReference type="SUPFAM" id="SSF53383">
    <property type="entry name" value="PLP-dependent transferases"/>
    <property type="match status" value="1"/>
</dbReference>
<organism>
    <name type="scientific">Roseobacter denitrificans (strain ATCC 33942 / OCh 114)</name>
    <name type="common">Erythrobacter sp. (strain OCh 114)</name>
    <name type="synonym">Roseobacter denitrificans</name>
    <dbReference type="NCBI Taxonomy" id="375451"/>
    <lineage>
        <taxon>Bacteria</taxon>
        <taxon>Pseudomonadati</taxon>
        <taxon>Pseudomonadota</taxon>
        <taxon>Alphaproteobacteria</taxon>
        <taxon>Rhodobacterales</taxon>
        <taxon>Roseobacteraceae</taxon>
        <taxon>Roseobacter</taxon>
    </lineage>
</organism>
<proteinExistence type="inferred from homology"/>